<accession>Q80873</accession>
<accession>Q07117</accession>
<protein>
    <recommendedName>
        <fullName>RNA-directed RNA polymerase</fullName>
        <ecNumber>2.7.7.48</ecNumber>
    </recommendedName>
    <alternativeName>
        <fullName>Gamma-A protein</fullName>
    </alternativeName>
</protein>
<dbReference type="EC" id="2.7.7.48"/>
<dbReference type="EMBL" id="M16576">
    <property type="protein sequence ID" value="AAA66600.1"/>
    <property type="molecule type" value="Genomic_RNA"/>
</dbReference>
<dbReference type="EMBL" id="X52774">
    <property type="protein sequence ID" value="CAA36983.1"/>
    <property type="molecule type" value="Genomic_RNA"/>
</dbReference>
<dbReference type="PIR" id="PN0105">
    <property type="entry name" value="PN0105"/>
</dbReference>
<dbReference type="PIR" id="PN0108">
    <property type="entry name" value="PN0108"/>
</dbReference>
<dbReference type="RefSeq" id="NP_604481.1">
    <property type="nucleotide sequence ID" value="NC_003478.1"/>
</dbReference>
<dbReference type="GeneID" id="962675"/>
<dbReference type="KEGG" id="vg:962675"/>
<dbReference type="OrthoDB" id="2873at10239"/>
<dbReference type="Proteomes" id="UP000001667">
    <property type="component" value="Genome"/>
</dbReference>
<dbReference type="GO" id="GO:0000166">
    <property type="term" value="F:nucleotide binding"/>
    <property type="evidence" value="ECO:0007669"/>
    <property type="project" value="UniProtKB-KW"/>
</dbReference>
<dbReference type="GO" id="GO:0003723">
    <property type="term" value="F:RNA binding"/>
    <property type="evidence" value="ECO:0007669"/>
    <property type="project" value="InterPro"/>
</dbReference>
<dbReference type="GO" id="GO:0003968">
    <property type="term" value="F:RNA-directed RNA polymerase activity"/>
    <property type="evidence" value="ECO:0007669"/>
    <property type="project" value="UniProtKB-KW"/>
</dbReference>
<dbReference type="GO" id="GO:0006351">
    <property type="term" value="P:DNA-templated transcription"/>
    <property type="evidence" value="ECO:0007669"/>
    <property type="project" value="InterPro"/>
</dbReference>
<dbReference type="GO" id="GO:0039694">
    <property type="term" value="P:viral RNA genome replication"/>
    <property type="evidence" value="ECO:0007669"/>
    <property type="project" value="InterPro"/>
</dbReference>
<dbReference type="CDD" id="cd23251">
    <property type="entry name" value="Virgaviridae_RdRp"/>
    <property type="match status" value="1"/>
</dbReference>
<dbReference type="InterPro" id="IPR043502">
    <property type="entry name" value="DNA/RNA_pol_sf"/>
</dbReference>
<dbReference type="InterPro" id="IPR001788">
    <property type="entry name" value="RNA-dep_RNA_pol_alsuvir"/>
</dbReference>
<dbReference type="InterPro" id="IPR007094">
    <property type="entry name" value="RNA-dir_pol_PSvirus"/>
</dbReference>
<dbReference type="InterPro" id="IPR047310">
    <property type="entry name" value="Virgaviridae_RdRp"/>
</dbReference>
<dbReference type="Pfam" id="PF00978">
    <property type="entry name" value="RdRP_2"/>
    <property type="match status" value="1"/>
</dbReference>
<dbReference type="SUPFAM" id="SSF56672">
    <property type="entry name" value="DNA/RNA polymerases"/>
    <property type="match status" value="1"/>
</dbReference>
<dbReference type="PROSITE" id="PS50507">
    <property type="entry name" value="RDRP_SSRNA_POS"/>
    <property type="match status" value="1"/>
</dbReference>
<evidence type="ECO:0000255" key="1">
    <source>
        <dbReference type="PROSITE-ProRule" id="PRU00539"/>
    </source>
</evidence>
<evidence type="ECO:0000269" key="2">
    <source>
    </source>
</evidence>
<evidence type="ECO:0000269" key="3">
    <source>
    </source>
</evidence>
<evidence type="ECO:0000305" key="4"/>
<organismHost>
    <name type="scientific">Hordeum vulgare</name>
    <name type="common">Barley</name>
    <dbReference type="NCBI Taxonomy" id="4513"/>
</organismHost>
<organismHost>
    <name type="scientific">Triticum aestivum</name>
    <name type="common">Wheat</name>
    <dbReference type="NCBI Taxonomy" id="4565"/>
</organismHost>
<keyword id="KW-0547">Nucleotide-binding</keyword>
<keyword id="KW-0548">Nucleotidyltransferase</keyword>
<keyword id="KW-1185">Reference proteome</keyword>
<keyword id="KW-0696">RNA-directed RNA polymerase</keyword>
<keyword id="KW-0808">Transferase</keyword>
<keyword id="KW-0693">Viral RNA replication</keyword>
<comment type="function">
    <text evidence="2">RNA-directed RNA polymerase plays an essential role in the virus replication.</text>
</comment>
<comment type="catalytic activity">
    <reaction evidence="1">
        <text>RNA(n) + a ribonucleoside 5'-triphosphate = RNA(n+1) + diphosphate</text>
        <dbReference type="Rhea" id="RHEA:21248"/>
        <dbReference type="Rhea" id="RHEA-COMP:14527"/>
        <dbReference type="Rhea" id="RHEA-COMP:17342"/>
        <dbReference type="ChEBI" id="CHEBI:33019"/>
        <dbReference type="ChEBI" id="CHEBI:61557"/>
        <dbReference type="ChEBI" id="CHEBI:140395"/>
        <dbReference type="EC" id="2.7.7.48"/>
    </reaction>
</comment>
<comment type="subcellular location">
    <subcellularLocation>
        <location evidence="3">Host chloroplast envelope</location>
    </subcellularLocation>
    <text evidence="3">The viral replication sites are located at the host chloroplast membrane.</text>
</comment>
<comment type="miscellaneous">
    <text evidence="4">The genome of this virus consists of three linear, positive, single-stranded RNAs encapsidated in separate virions designated RNA-alpha, RNA-beta and RNA-gamma. Three proteins (alpha-A, beta-A and gamma-A) are translated directly from these genomic RNAs and the remaining proteins encoded on RNA-beta (beta-B, beta-C and beta-D) and RNA-gamma (gamma-B) are expressed via three subgenomic messenger RNAs.</text>
</comment>
<comment type="similarity">
    <text evidence="4">Belongs to the ssRNA positive-strand viruses RNA-directed RNA polymerase family.</text>
</comment>
<reference key="1">
    <citation type="journal article" date="1987" name="Virology">
        <title>Nucleotide sequence and genetic organization of barley stripe mosaic virus RNA gamma.</title>
        <authorList>
            <person name="Gustafson G."/>
            <person name="Hunter B."/>
            <person name="Hanau R."/>
            <person name="Armour S.L."/>
            <person name="Jackson A.O."/>
        </authorList>
    </citation>
    <scope>NUCLEOTIDE SEQUENCE [GENOMIC RNA]</scope>
</reference>
<reference key="2">
    <citation type="journal article" date="1989" name="Mol. Biol. (Mosk.)">
        <title>Primary structure of RNA 3 of barley stripe mosaic virus and its variability.</title>
        <authorList>
            <person name="Kozlov Y.V."/>
            <person name="Afanasiev B.N."/>
            <person name="Rupasov V.V."/>
            <person name="Golova I.B."/>
            <person name="Kulaeva O.I."/>
            <person name="Dolia V.V."/>
            <person name="Atabekov I.G."/>
            <person name="Baev A.A."/>
        </authorList>
    </citation>
    <scope>NUCLEOTIDE SEQUENCE [GENOMIC RNA]</scope>
</reference>
<reference key="3">
    <citation type="journal article" date="1990" name="EMBO J.">
        <title>Identification of barley stripe mosaic virus genes involved in viral RNA replication and systemic movement.</title>
        <authorList>
            <person name="Petty I.T."/>
            <person name="French R."/>
            <person name="Jones R.W."/>
            <person name="Jackson A.O."/>
        </authorList>
    </citation>
    <scope>FUNCTION</scope>
</reference>
<reference key="4">
    <citation type="journal article" date="2017" name="PLoS Pathog.">
        <title>The Barley stripe mosaic virus gammab protein promotes chloroplast-targeted replication by enhancing unwinding of RNA duplexes.</title>
        <authorList>
            <person name="Zhang K."/>
            <person name="Zhang Y."/>
            <person name="Yang M."/>
            <person name="Liu S."/>
            <person name="Li Z."/>
            <person name="Wang X."/>
            <person name="Han C."/>
            <person name="Yu J."/>
            <person name="Li D."/>
        </authorList>
    </citation>
    <scope>SUBCELLULAR LOCATION</scope>
</reference>
<organism>
    <name type="scientific">Barley stripe mosaic virus</name>
    <name type="common">BSMV</name>
    <dbReference type="NCBI Taxonomy" id="12327"/>
    <lineage>
        <taxon>Viruses</taxon>
        <taxon>Riboviria</taxon>
        <taxon>Orthornavirae</taxon>
        <taxon>Kitrinoviricota</taxon>
        <taxon>Alsuviricetes</taxon>
        <taxon>Martellivirales</taxon>
        <taxon>Virgaviridae</taxon>
        <taxon>Hordeivirus</taxon>
    </lineage>
</organism>
<name>RDRP_BSMV</name>
<sequence length="771" mass="87304">MDVVKKFAVMSVTVVAGPVLTLSSPVVVTFGTSLIAVSLVKRLLQEQPRVIAHDHEHYPGGSESSSSSCATAPILRNLSRDQCDSENIGCSSSACSPSEIVKVTRQVVEVERGLYRDKQQFGMDVVKKFAVMSVTVVAGPVLTLSSPVVVTFGTSLIAVSLVKRLLQEQPRVIAHDHEHYPGGSESSSSSCATAPILRNLSRDQCDSENIGCSSSACSPSEIVKVTRQVVEVERGLYRDIFQDNEIPSVMEEKLQKLLYSEGEKIRRRCQFEASTMHSRKVKVPEVGTIPDIQTWFDATFPGNSVRFSDFDGYTVATEDINMDVQDCRLKFGKTFRPYEFKESLKPVLRTAMPEKRQGSLIESVLAFRKRNLAAPRLQGALNEWHTIENVLKKALKVFFFEDLIDRTDHCTYESALRWWDKQSVTARAQLVADQRRLCDVDFTTYNFMIKNDVKPKLDLTPQVEYAALQTVVYPDKIVNAFFGPIIKEINERIIRALRPHVVFNSRMTADELNETVAFLTPHKYRALEIDFSKFDKSKTGLHIKAVIGLYKLFGLDGLLKVLWEKSQYQTYVKDRNFGLEAYLLYQQKSGNCDTYGSNTWSAALALLDCLPLEDAHFCVFGGDDSLILFDQGYIISDPCRQLAGTWNLECKVFDFKYPAFCGKFLLCIDGKYQFVPDAAKFITKLGRTDVRDVEVLSEIYISINDNYKSYKDFKVLDALDKALVDRYRSPYSAISALVSLCYHIFDFNKFKLLFNCEGKFVDKKLRKDFEW</sequence>
<proteinExistence type="inferred from homology"/>
<feature type="chain" id="PRO_0000222493" description="RNA-directed RNA polymerase">
    <location>
        <begin position="1"/>
        <end position="771"/>
    </location>
</feature>
<feature type="domain" description="RdRp catalytic" evidence="1">
    <location>
        <begin position="524"/>
        <end position="637"/>
    </location>
</feature>
<feature type="sequence conflict" description="In Ref. 2; CAA36983." evidence="4" ref="2">
    <original>KQ</original>
    <variation>I</variation>
    <location>
        <begin position="118"/>
        <end position="119"/>
    </location>
</feature>
<feature type="sequence conflict" description="In Ref. 2; CAA36983." evidence="4" ref="2">
    <original>P</original>
    <variation>L</variation>
    <location>
        <position position="301"/>
    </location>
</feature>
<feature type="sequence conflict" description="In Ref. 2; CAA36983." evidence="4" ref="2">
    <original>E</original>
    <variation>K</variation>
    <location>
        <position position="318"/>
    </location>
</feature>
<feature type="sequence conflict" description="In Ref. 2; CAA36983." evidence="4" ref="2">
    <original>Q</original>
    <variation>R</variation>
    <location>
        <position position="357"/>
    </location>
</feature>
<feature type="sequence conflict" description="In Ref. 2; CAA36983." evidence="4" ref="2">
    <original>E</original>
    <variation>D</variation>
    <location>
        <position position="362"/>
    </location>
</feature>
<feature type="sequence conflict" description="In Ref. 2; CAA36983." evidence="4" ref="2">
    <original>E</original>
    <variation>V</variation>
    <location>
        <position position="488"/>
    </location>
</feature>
<feature type="sequence conflict" description="In Ref. 2; CAA36983." evidence="4" ref="2">
    <original>D</original>
    <variation>N</variation>
    <location>
        <position position="725"/>
    </location>
</feature>
<feature type="sequence conflict" description="In Ref. 2; CAA36983." evidence="4" ref="2">
    <original>I</original>
    <variation>M</variation>
    <location>
        <position position="744"/>
    </location>
</feature>